<keyword id="KW-0963">Cytoplasm</keyword>
<keyword id="KW-0342">GTP-binding</keyword>
<keyword id="KW-0378">Hydrolase</keyword>
<keyword id="KW-0460">Magnesium</keyword>
<keyword id="KW-0479">Metal-binding</keyword>
<keyword id="KW-0547">Nucleotide-binding</keyword>
<keyword id="KW-0630">Potassium</keyword>
<keyword id="KW-1185">Reference proteome</keyword>
<keyword id="KW-0819">tRNA processing</keyword>
<sequence>MINKIMKKYETIYALATAPYNSAIHVIRLSGPDAFEIINKICDKQITKEGYRIQNARIVDNDQIIDDVLLMKFVAPKSFTGEDSIEINCHGGLFVINKIMALLNKHGAHLARRGEFSKRSYINKKIDLNQATAIHDLIFAKNNLSHSASIKALSGEFSKDIKNIQQEIFRLIGLVEIAIDYPEYEDEKKELTEEFKNLTNIRQKLQRIVNKSLKLKQISEGIKIAIVGEPNAGKSSLLNALLNEQKAIVTNIPGTTRDTVEGQIVLNDELIINLIDTAGIRKSSDQIEQIGINKSFKTIDKSDLVIYLIDLNKYQNYDKTNIYKYLINKKKQFVLVGNKVDEVDPTLNTGEIQIKISAKNNDISDLIKYLEETSLAIFNDENKQDSIFQEEWQINLLQTALYNINLILNDPNQYHDLVIQHLNEANNSLLKVLSEYEDYNLIDEIFKNFCLGK</sequence>
<dbReference type="EC" id="3.6.-.-" evidence="1"/>
<dbReference type="EMBL" id="AE015450">
    <property type="protein sequence ID" value="AAP57069.2"/>
    <property type="molecule type" value="Genomic_DNA"/>
</dbReference>
<dbReference type="SMR" id="Q7NAD9"/>
<dbReference type="KEGG" id="mga:MGA_0604"/>
<dbReference type="HOGENOM" id="CLU_019624_4_1_14"/>
<dbReference type="OrthoDB" id="9805918at2"/>
<dbReference type="Proteomes" id="UP000001418">
    <property type="component" value="Chromosome"/>
</dbReference>
<dbReference type="GO" id="GO:0005829">
    <property type="term" value="C:cytosol"/>
    <property type="evidence" value="ECO:0007669"/>
    <property type="project" value="TreeGrafter"/>
</dbReference>
<dbReference type="GO" id="GO:0005525">
    <property type="term" value="F:GTP binding"/>
    <property type="evidence" value="ECO:0007669"/>
    <property type="project" value="UniProtKB-UniRule"/>
</dbReference>
<dbReference type="GO" id="GO:0003924">
    <property type="term" value="F:GTPase activity"/>
    <property type="evidence" value="ECO:0007669"/>
    <property type="project" value="UniProtKB-UniRule"/>
</dbReference>
<dbReference type="GO" id="GO:0046872">
    <property type="term" value="F:metal ion binding"/>
    <property type="evidence" value="ECO:0007669"/>
    <property type="project" value="UniProtKB-KW"/>
</dbReference>
<dbReference type="GO" id="GO:0030488">
    <property type="term" value="P:tRNA methylation"/>
    <property type="evidence" value="ECO:0007669"/>
    <property type="project" value="TreeGrafter"/>
</dbReference>
<dbReference type="GO" id="GO:0002098">
    <property type="term" value="P:tRNA wobble uridine modification"/>
    <property type="evidence" value="ECO:0007669"/>
    <property type="project" value="TreeGrafter"/>
</dbReference>
<dbReference type="CDD" id="cd04164">
    <property type="entry name" value="trmE"/>
    <property type="match status" value="1"/>
</dbReference>
<dbReference type="CDD" id="cd14858">
    <property type="entry name" value="TrmE_N"/>
    <property type="match status" value="1"/>
</dbReference>
<dbReference type="Gene3D" id="3.40.50.300">
    <property type="entry name" value="P-loop containing nucleotide triphosphate hydrolases"/>
    <property type="match status" value="1"/>
</dbReference>
<dbReference type="Gene3D" id="3.30.1360.120">
    <property type="entry name" value="Probable tRNA modification gtpase trme, domain 1"/>
    <property type="match status" value="1"/>
</dbReference>
<dbReference type="Gene3D" id="1.20.120.430">
    <property type="entry name" value="tRNA modification GTPase MnmE domain 2"/>
    <property type="match status" value="1"/>
</dbReference>
<dbReference type="HAMAP" id="MF_00379">
    <property type="entry name" value="GTPase_MnmE"/>
    <property type="match status" value="1"/>
</dbReference>
<dbReference type="InterPro" id="IPR031168">
    <property type="entry name" value="G_TrmE"/>
</dbReference>
<dbReference type="InterPro" id="IPR006073">
    <property type="entry name" value="GTP-bd"/>
</dbReference>
<dbReference type="InterPro" id="IPR018948">
    <property type="entry name" value="GTP-bd_TrmE_N"/>
</dbReference>
<dbReference type="InterPro" id="IPR004520">
    <property type="entry name" value="GTPase_MnmE"/>
</dbReference>
<dbReference type="InterPro" id="IPR027368">
    <property type="entry name" value="MnmE_dom2"/>
</dbReference>
<dbReference type="InterPro" id="IPR025867">
    <property type="entry name" value="MnmE_helical"/>
</dbReference>
<dbReference type="InterPro" id="IPR027417">
    <property type="entry name" value="P-loop_NTPase"/>
</dbReference>
<dbReference type="InterPro" id="IPR005225">
    <property type="entry name" value="Small_GTP-bd"/>
</dbReference>
<dbReference type="InterPro" id="IPR027266">
    <property type="entry name" value="TrmE/GcvT_dom1"/>
</dbReference>
<dbReference type="NCBIfam" id="TIGR00450">
    <property type="entry name" value="mnmE_trmE_thdF"/>
    <property type="match status" value="1"/>
</dbReference>
<dbReference type="NCBIfam" id="TIGR00231">
    <property type="entry name" value="small_GTP"/>
    <property type="match status" value="1"/>
</dbReference>
<dbReference type="PANTHER" id="PTHR42714">
    <property type="entry name" value="TRNA MODIFICATION GTPASE GTPBP3"/>
    <property type="match status" value="1"/>
</dbReference>
<dbReference type="PANTHER" id="PTHR42714:SF2">
    <property type="entry name" value="TRNA MODIFICATION GTPASE GTPBP3, MITOCHONDRIAL"/>
    <property type="match status" value="1"/>
</dbReference>
<dbReference type="Pfam" id="PF01926">
    <property type="entry name" value="MMR_HSR1"/>
    <property type="match status" value="1"/>
</dbReference>
<dbReference type="Pfam" id="PF12631">
    <property type="entry name" value="MnmE_helical"/>
    <property type="match status" value="1"/>
</dbReference>
<dbReference type="Pfam" id="PF10396">
    <property type="entry name" value="TrmE_N"/>
    <property type="match status" value="1"/>
</dbReference>
<dbReference type="PRINTS" id="PR00326">
    <property type="entry name" value="GTP1OBG"/>
</dbReference>
<dbReference type="SUPFAM" id="SSF52540">
    <property type="entry name" value="P-loop containing nucleoside triphosphate hydrolases"/>
    <property type="match status" value="1"/>
</dbReference>
<dbReference type="PROSITE" id="PS51709">
    <property type="entry name" value="G_TRME"/>
    <property type="match status" value="1"/>
</dbReference>
<comment type="function">
    <text evidence="1">Exhibits a very high intrinsic GTPase hydrolysis rate. Involved in the addition of a carboxymethylaminomethyl (cmnm) group at the wobble position (U34) of certain tRNAs, forming tRNA-cmnm(5)s(2)U34.</text>
</comment>
<comment type="cofactor">
    <cofactor evidence="1">
        <name>K(+)</name>
        <dbReference type="ChEBI" id="CHEBI:29103"/>
    </cofactor>
    <text evidence="1">Binds 1 potassium ion per subunit.</text>
</comment>
<comment type="subunit">
    <text evidence="1">Homodimer. Heterotetramer of two MnmE and two MnmG subunits.</text>
</comment>
<comment type="subcellular location">
    <subcellularLocation>
        <location evidence="1">Cytoplasm</location>
    </subcellularLocation>
</comment>
<comment type="similarity">
    <text evidence="1">Belongs to the TRAFAC class TrmE-Era-EngA-EngB-Septin-like GTPase superfamily. TrmE GTPase family.</text>
</comment>
<feature type="chain" id="PRO_0000345838" description="tRNA modification GTPase MnmE">
    <location>
        <begin position="1"/>
        <end position="453"/>
    </location>
</feature>
<feature type="domain" description="TrmE-type G">
    <location>
        <begin position="221"/>
        <end position="375"/>
    </location>
</feature>
<feature type="binding site" evidence="1">
    <location>
        <position position="28"/>
    </location>
    <ligand>
        <name>(6S)-5-formyl-5,6,7,8-tetrahydrofolate</name>
        <dbReference type="ChEBI" id="CHEBI:57457"/>
    </ligand>
</feature>
<feature type="binding site" evidence="1">
    <location>
        <position position="86"/>
    </location>
    <ligand>
        <name>(6S)-5-formyl-5,6,7,8-tetrahydrofolate</name>
        <dbReference type="ChEBI" id="CHEBI:57457"/>
    </ligand>
</feature>
<feature type="binding site" evidence="1">
    <location>
        <position position="125"/>
    </location>
    <ligand>
        <name>(6S)-5-formyl-5,6,7,8-tetrahydrofolate</name>
        <dbReference type="ChEBI" id="CHEBI:57457"/>
    </ligand>
</feature>
<feature type="binding site" evidence="1">
    <location>
        <begin position="231"/>
        <end position="236"/>
    </location>
    <ligand>
        <name>GTP</name>
        <dbReference type="ChEBI" id="CHEBI:37565"/>
    </ligand>
</feature>
<feature type="binding site" evidence="1">
    <location>
        <position position="231"/>
    </location>
    <ligand>
        <name>K(+)</name>
        <dbReference type="ChEBI" id="CHEBI:29103"/>
    </ligand>
</feature>
<feature type="binding site" evidence="1">
    <location>
        <position position="235"/>
    </location>
    <ligand>
        <name>Mg(2+)</name>
        <dbReference type="ChEBI" id="CHEBI:18420"/>
    </ligand>
</feature>
<feature type="binding site" evidence="1">
    <location>
        <begin position="250"/>
        <end position="256"/>
    </location>
    <ligand>
        <name>GTP</name>
        <dbReference type="ChEBI" id="CHEBI:37565"/>
    </ligand>
</feature>
<feature type="binding site" evidence="1">
    <location>
        <position position="250"/>
    </location>
    <ligand>
        <name>K(+)</name>
        <dbReference type="ChEBI" id="CHEBI:29103"/>
    </ligand>
</feature>
<feature type="binding site" evidence="1">
    <location>
        <position position="252"/>
    </location>
    <ligand>
        <name>K(+)</name>
        <dbReference type="ChEBI" id="CHEBI:29103"/>
    </ligand>
</feature>
<feature type="binding site" evidence="1">
    <location>
        <position position="255"/>
    </location>
    <ligand>
        <name>K(+)</name>
        <dbReference type="ChEBI" id="CHEBI:29103"/>
    </ligand>
</feature>
<feature type="binding site" evidence="1">
    <location>
        <position position="256"/>
    </location>
    <ligand>
        <name>Mg(2+)</name>
        <dbReference type="ChEBI" id="CHEBI:18420"/>
    </ligand>
</feature>
<feature type="binding site" evidence="1">
    <location>
        <begin position="276"/>
        <end position="279"/>
    </location>
    <ligand>
        <name>GTP</name>
        <dbReference type="ChEBI" id="CHEBI:37565"/>
    </ligand>
</feature>
<feature type="binding site" evidence="1">
    <location>
        <position position="453"/>
    </location>
    <ligand>
        <name>(6S)-5-formyl-5,6,7,8-tetrahydrofolate</name>
        <dbReference type="ChEBI" id="CHEBI:57457"/>
    </ligand>
</feature>
<proteinExistence type="inferred from homology"/>
<name>MNME_MYCGA</name>
<organism>
    <name type="scientific">Mycoplasmoides gallisepticum (strain R(low / passage 15 / clone 2))</name>
    <name type="common">Mycoplasma gallisepticum</name>
    <dbReference type="NCBI Taxonomy" id="710127"/>
    <lineage>
        <taxon>Bacteria</taxon>
        <taxon>Bacillati</taxon>
        <taxon>Mycoplasmatota</taxon>
        <taxon>Mycoplasmoidales</taxon>
        <taxon>Mycoplasmoidaceae</taxon>
        <taxon>Mycoplasmoides</taxon>
    </lineage>
</organism>
<reference key="1">
    <citation type="journal article" date="2003" name="Microbiology">
        <title>The complete genome sequence of the avian pathogen Mycoplasma gallisepticum strain R(low).</title>
        <authorList>
            <person name="Papazisi L."/>
            <person name="Gorton T.S."/>
            <person name="Kutish G."/>
            <person name="Markham P.F."/>
            <person name="Browning G.F."/>
            <person name="Nguyen D.K."/>
            <person name="Swartzell S."/>
            <person name="Madan A."/>
            <person name="Mahairas G."/>
            <person name="Geary S.J."/>
        </authorList>
    </citation>
    <scope>NUCLEOTIDE SEQUENCE [LARGE SCALE GENOMIC DNA]</scope>
    <source>
        <strain>R(low / passage 15 / clone 2)</strain>
    </source>
</reference>
<protein>
    <recommendedName>
        <fullName evidence="1">tRNA modification GTPase MnmE</fullName>
        <ecNumber evidence="1">3.6.-.-</ecNumber>
    </recommendedName>
</protein>
<accession>Q7NAD9</accession>
<evidence type="ECO:0000255" key="1">
    <source>
        <dbReference type="HAMAP-Rule" id="MF_00379"/>
    </source>
</evidence>
<gene>
    <name evidence="1" type="primary">mnmE</name>
    <name evidence="1" type="synonym">trmE</name>
    <name type="ordered locus">MYCGA7190</name>
    <name type="ORF">MGA_0604</name>
</gene>